<dbReference type="EMBL" id="BC083667">
    <property type="protein sequence ID" value="AAH83667.1"/>
    <property type="molecule type" value="mRNA"/>
</dbReference>
<dbReference type="RefSeq" id="NP_001012081.1">
    <property type="nucleotide sequence ID" value="NM_001012081.2"/>
</dbReference>
<dbReference type="RefSeq" id="NP_001401985.1">
    <property type="nucleotide sequence ID" value="NM_001415056.1"/>
</dbReference>
<dbReference type="RefSeq" id="XP_008759532.1">
    <property type="nucleotide sequence ID" value="XM_008761310.2"/>
</dbReference>
<dbReference type="SMR" id="Q5XIL3"/>
<dbReference type="FunCoup" id="Q5XIL3">
    <property type="interactions" value="3735"/>
</dbReference>
<dbReference type="STRING" id="10116.ENSRNOP00000028815"/>
<dbReference type="GlyGen" id="Q5XIL3">
    <property type="glycosylation" value="1 site"/>
</dbReference>
<dbReference type="PhosphoSitePlus" id="Q5XIL3"/>
<dbReference type="PaxDb" id="10116-ENSRNOP00000028815"/>
<dbReference type="GeneID" id="310685"/>
<dbReference type="KEGG" id="rno:310685"/>
<dbReference type="UCSC" id="RGD:1311545">
    <property type="organism name" value="rat"/>
</dbReference>
<dbReference type="AGR" id="RGD:1311545"/>
<dbReference type="CTD" id="10623"/>
<dbReference type="RGD" id="1311545">
    <property type="gene designation" value="Polr3c"/>
</dbReference>
<dbReference type="VEuPathDB" id="HostDB:ENSRNOG00000033560"/>
<dbReference type="eggNOG" id="KOG2587">
    <property type="taxonomic scope" value="Eukaryota"/>
</dbReference>
<dbReference type="HOGENOM" id="CLU_023294_1_1_1"/>
<dbReference type="InParanoid" id="Q5XIL3"/>
<dbReference type="OrthoDB" id="272392at2759"/>
<dbReference type="PhylomeDB" id="Q5XIL3"/>
<dbReference type="TreeFam" id="TF103048"/>
<dbReference type="Reactome" id="R-RNO-76061">
    <property type="pathway name" value="RNA Polymerase III Transcription Initiation From Type 1 Promoter"/>
</dbReference>
<dbReference type="Reactome" id="R-RNO-76066">
    <property type="pathway name" value="RNA Polymerase III Transcription Initiation From Type 2 Promoter"/>
</dbReference>
<dbReference type="Reactome" id="R-RNO-76071">
    <property type="pathway name" value="RNA Polymerase III Transcription Initiation From Type 3 Promoter"/>
</dbReference>
<dbReference type="PRO" id="PR:Q5XIL3"/>
<dbReference type="Proteomes" id="UP000002494">
    <property type="component" value="Chromosome 2"/>
</dbReference>
<dbReference type="Bgee" id="ENSRNOG00000033560">
    <property type="expression patterns" value="Expressed in jejunum and 19 other cell types or tissues"/>
</dbReference>
<dbReference type="GO" id="GO:0005654">
    <property type="term" value="C:nucleoplasm"/>
    <property type="evidence" value="ECO:0007669"/>
    <property type="project" value="Ensembl"/>
</dbReference>
<dbReference type="GO" id="GO:0005666">
    <property type="term" value="C:RNA polymerase III complex"/>
    <property type="evidence" value="ECO:0000266"/>
    <property type="project" value="RGD"/>
</dbReference>
<dbReference type="GO" id="GO:0003697">
    <property type="term" value="F:single-stranded DNA binding"/>
    <property type="evidence" value="ECO:0000250"/>
    <property type="project" value="UniProtKB"/>
</dbReference>
<dbReference type="GO" id="GO:0051607">
    <property type="term" value="P:defense response to virus"/>
    <property type="evidence" value="ECO:0007669"/>
    <property type="project" value="UniProtKB-KW"/>
</dbReference>
<dbReference type="GO" id="GO:0006351">
    <property type="term" value="P:DNA-templated transcription"/>
    <property type="evidence" value="ECO:0007669"/>
    <property type="project" value="InterPro"/>
</dbReference>
<dbReference type="GO" id="GO:0045087">
    <property type="term" value="P:innate immune response"/>
    <property type="evidence" value="ECO:0007669"/>
    <property type="project" value="UniProtKB-KW"/>
</dbReference>
<dbReference type="GO" id="GO:0045089">
    <property type="term" value="P:positive regulation of innate immune response"/>
    <property type="evidence" value="ECO:0000250"/>
    <property type="project" value="UniProtKB"/>
</dbReference>
<dbReference type="GO" id="GO:0032728">
    <property type="term" value="P:positive regulation of interferon-beta production"/>
    <property type="evidence" value="ECO:0000250"/>
    <property type="project" value="UniProtKB"/>
</dbReference>
<dbReference type="FunFam" id="1.10.10.10:FF:000199">
    <property type="entry name" value="DNA-directed RNA polymerase III subunit RPC3"/>
    <property type="match status" value="1"/>
</dbReference>
<dbReference type="FunFam" id="1.10.10.10:FF:000218">
    <property type="entry name" value="DNA-directed RNA polymerase III subunit RPC3"/>
    <property type="match status" value="1"/>
</dbReference>
<dbReference type="FunFam" id="1.10.10.10:FF:000256">
    <property type="entry name" value="DNA-directed RNA polymerase III subunit RPC3"/>
    <property type="match status" value="1"/>
</dbReference>
<dbReference type="FunFam" id="1.10.10.10:FF:000262">
    <property type="entry name" value="DNA-directed RNA polymerase III subunit RPC3"/>
    <property type="match status" value="1"/>
</dbReference>
<dbReference type="Gene3D" id="6.10.140.1450">
    <property type="match status" value="1"/>
</dbReference>
<dbReference type="Gene3D" id="1.10.10.10">
    <property type="entry name" value="Winged helix-like DNA-binding domain superfamily/Winged helix DNA-binding domain"/>
    <property type="match status" value="4"/>
</dbReference>
<dbReference type="InterPro" id="IPR055207">
    <property type="entry name" value="POLR3C_WHD"/>
</dbReference>
<dbReference type="InterPro" id="IPR013197">
    <property type="entry name" value="RNA_pol_III_RPC82-rel_HTH"/>
</dbReference>
<dbReference type="InterPro" id="IPR008806">
    <property type="entry name" value="RNA_pol_III_Rpc82_C"/>
</dbReference>
<dbReference type="InterPro" id="IPR039748">
    <property type="entry name" value="RPC3"/>
</dbReference>
<dbReference type="InterPro" id="IPR036388">
    <property type="entry name" value="WH-like_DNA-bd_sf"/>
</dbReference>
<dbReference type="PANTHER" id="PTHR12949:SF0">
    <property type="entry name" value="DNA-DIRECTED RNA POLYMERASE III SUBUNIT RPC3"/>
    <property type="match status" value="1"/>
</dbReference>
<dbReference type="PANTHER" id="PTHR12949">
    <property type="entry name" value="RNA POLYMERASE III DNA DIRECTED -RELATED"/>
    <property type="match status" value="1"/>
</dbReference>
<dbReference type="Pfam" id="PF08221">
    <property type="entry name" value="HTH_9"/>
    <property type="match status" value="1"/>
</dbReference>
<dbReference type="Pfam" id="PF22536">
    <property type="entry name" value="POLR3C_WHD"/>
    <property type="match status" value="1"/>
</dbReference>
<dbReference type="Pfam" id="PF05645">
    <property type="entry name" value="RNA_pol_Rpc82"/>
    <property type="match status" value="1"/>
</dbReference>
<dbReference type="Pfam" id="PF20912">
    <property type="entry name" value="RPC3_helical"/>
    <property type="match status" value="1"/>
</dbReference>
<protein>
    <recommendedName>
        <fullName>DNA-directed RNA polymerase III subunit RPC3</fullName>
        <shortName>RNA polymerase III subunit C3</shortName>
    </recommendedName>
    <alternativeName>
        <fullName>DNA-directed RNA polymerase III subunit C</fullName>
    </alternativeName>
</protein>
<gene>
    <name evidence="4" type="primary">Polr3c</name>
</gene>
<proteinExistence type="evidence at transcript level"/>
<keyword id="KW-0051">Antiviral defense</keyword>
<keyword id="KW-0238">DNA-binding</keyword>
<keyword id="KW-0240">DNA-directed RNA polymerase</keyword>
<keyword id="KW-0391">Immunity</keyword>
<keyword id="KW-0399">Innate immunity</keyword>
<keyword id="KW-0539">Nucleus</keyword>
<keyword id="KW-0597">Phosphoprotein</keyword>
<keyword id="KW-1185">Reference proteome</keyword>
<keyword id="KW-0804">Transcription</keyword>
<feature type="chain" id="PRO_0000254906" description="DNA-directed RNA polymerase III subunit RPC3">
    <location>
        <begin position="1"/>
        <end position="533"/>
    </location>
</feature>
<feature type="region of interest" description="Disordered" evidence="2">
    <location>
        <begin position="161"/>
        <end position="183"/>
    </location>
</feature>
<feature type="region of interest" description="Disordered" evidence="2">
    <location>
        <begin position="197"/>
        <end position="228"/>
    </location>
</feature>
<feature type="compositionally biased region" description="Basic and acidic residues" evidence="2">
    <location>
        <begin position="211"/>
        <end position="222"/>
    </location>
</feature>
<feature type="modified residue" description="Phosphoserine" evidence="1">
    <location>
        <position position="194"/>
    </location>
</feature>
<reference key="1">
    <citation type="journal article" date="2004" name="Genome Res.">
        <title>The status, quality, and expansion of the NIH full-length cDNA project: the Mammalian Gene Collection (MGC).</title>
        <authorList>
            <consortium name="The MGC Project Team"/>
        </authorList>
    </citation>
    <scope>NUCLEOTIDE SEQUENCE [LARGE SCALE MRNA]</scope>
    <source>
        <tissue>Testis</tissue>
    </source>
</reference>
<accession>Q5XIL3</accession>
<organism>
    <name type="scientific">Rattus norvegicus</name>
    <name type="common">Rat</name>
    <dbReference type="NCBI Taxonomy" id="10116"/>
    <lineage>
        <taxon>Eukaryota</taxon>
        <taxon>Metazoa</taxon>
        <taxon>Chordata</taxon>
        <taxon>Craniata</taxon>
        <taxon>Vertebrata</taxon>
        <taxon>Euteleostomi</taxon>
        <taxon>Mammalia</taxon>
        <taxon>Eutheria</taxon>
        <taxon>Euarchontoglires</taxon>
        <taxon>Glires</taxon>
        <taxon>Rodentia</taxon>
        <taxon>Myomorpha</taxon>
        <taxon>Muroidea</taxon>
        <taxon>Muridae</taxon>
        <taxon>Murinae</taxon>
        <taxon>Rattus</taxon>
    </lineage>
</organism>
<evidence type="ECO:0000250" key="1">
    <source>
        <dbReference type="UniProtKB" id="Q9BUI4"/>
    </source>
</evidence>
<evidence type="ECO:0000256" key="2">
    <source>
        <dbReference type="SAM" id="MobiDB-lite"/>
    </source>
</evidence>
<evidence type="ECO:0000305" key="3"/>
<evidence type="ECO:0000312" key="4">
    <source>
        <dbReference type="RGD" id="1311545"/>
    </source>
</evidence>
<name>RPC3_RAT</name>
<sequence>MTQAEIKLCSLLLQEHFGEIVEKIGVHLIRTGSQPLRVIAHDTKASLDQVKKALCVLIHHNLVIYHVHKRGVVEYEAQCSRVLRMLRYPRYIYTTKTLYGDTGELIVEELLLNGKMTMSAVVKKVADRLTETMEDGKTMDYAEVSNAFVRLADTHFVQRCPLVPDTDSSDPGPPPPAPNLVINEKDMYLVPKLSLIGKGKRRRSSDEDAAGEPKAKKPRCTDNEEPTPDDGIYWQVNLDRFHQHFRDQAIVSAVANRMDQTSSEIVRTMLRMSEITTPSGAPFTQPLSSNEIFRSLPVGYNISKQVLDQYLTLLADDPLEFIGKAGDSGGGMYVINLHKALASLSTATLESVIQERFGSRCARIFRLVLQKKHLEQKQVEDFAMIPAKEAKDMLYKMLSENFISLQEIPKTPDHAPSRTFYLYTVNVLSAARMLLHRCYKSIANLIERRQFETKENKRLLEKSQRVEAIMASMQATGAEEVQLQEIEEMITAPERQQLETLKRNVNKLDASEIQVDETIFLLESYIESTMKRQ</sequence>
<comment type="function">
    <text evidence="1">DNA-dependent RNA polymerase catalyzes the transcription of DNA into RNA using the four ribonucleoside triphosphates as substrates (By similarity). Specific peripheric component of RNA polymerase III (Pol III) which synthesizes small non-coding RNAs including 5S rRNA, snRNAs, tRNAs and miRNAs from at least 500 distinct genomic loci. Part of POLR3C/RPC3-POLR3F/RPC6-POLR3G/RPC7 heterotrimer, coordinates the dynamics of Pol III stalk and clamp modules during the transition from apo to elongation state (By similarity). Pol III plays a key role in sensing and limiting infection by intracellular bacteria and DNA viruses. Acts as a nuclear and cytosolic DNA sensor involved in innate immune response. Can sense non-self dsDNA that serves as template for transcription into dsRNA. The non-self RNA polymerase III transcripts, such as Epstein-Barr virus-encoded RNAs (EBERs) induce type I interferon and NF-kappa-B through the RIG-I pathway. Preferentially binds single-stranded DNA (ssDNA) in a sequence-independent manner (By similarity).</text>
</comment>
<comment type="subunit">
    <text evidence="1">Component of the RNA polymerase III complex consisting of 17 subunits: a ten-subunit horseshoe-shaped catalytic core composed of POLR3A/RPC1, POLR3B/RPC2, POLR1C/RPAC1, POLR1D/RPAC2, POLR3K/RPC10, POLR2E/RPABC1, POLR2F/RPABC2, POLR2H/RPABC3, POLR2K/RPABC4 and POLR2L/RPABC5; a mobile stalk composed of two subunits POLR3H/RPC8 and CRCP/RPC9, protruding from the core and functioning primarily in transcription initiation; and additional subunits homologous to general transcription factors of the RNA polymerase II machinery, POLR3C/RPC3-POLR3F/RPC6-POLR3G/RPC7 heterotrimer required for transcription initiation and POLR3D/RPC4-POLR3E/RPC5 heterodimer involved in both transcription initiation and termination. Directly interacts with POLR3G/RPC7 and POLR3GL. Directly interacts with POLR3F/RPC6. Interacts with GTF3C4. As part of the RNA polymerase III complex, interacts with PKP2.</text>
</comment>
<comment type="subcellular location">
    <subcellularLocation>
        <location evidence="1">Nucleus</location>
    </subcellularLocation>
</comment>
<comment type="similarity">
    <text evidence="3">Belongs to the eukaryotic RPC3/POLR3C RNA polymerase subunit family.</text>
</comment>